<sequence>MHATTIVTVRKGNKVVIAGDGQVSLGQTIMKGNARKVRRIGKGGNVIAGFAGATADAFTLLERLEAKLEQYPDQLTRACVELAKDWRTDRYLRRLEAMMLVADKSVSLALTGTGDVLEPEHGVMAIGSGGNYALAAARALMDTDKDAEEIARKAMQIASDICVYTNNNFVVETLDAA</sequence>
<protein>
    <recommendedName>
        <fullName evidence="1">ATP-dependent protease subunit HslV</fullName>
        <ecNumber evidence="1">3.4.25.2</ecNumber>
    </recommendedName>
</protein>
<evidence type="ECO:0000255" key="1">
    <source>
        <dbReference type="HAMAP-Rule" id="MF_00248"/>
    </source>
</evidence>
<feature type="chain" id="PRO_0000148136" description="ATP-dependent protease subunit HslV">
    <location>
        <begin position="1"/>
        <end position="177"/>
    </location>
</feature>
<feature type="active site" evidence="1">
    <location>
        <position position="4"/>
    </location>
</feature>
<feature type="binding site" evidence="1">
    <location>
        <position position="159"/>
    </location>
    <ligand>
        <name>Na(+)</name>
        <dbReference type="ChEBI" id="CHEBI:29101"/>
    </ligand>
</feature>
<feature type="binding site" evidence="1">
    <location>
        <position position="162"/>
    </location>
    <ligand>
        <name>Na(+)</name>
        <dbReference type="ChEBI" id="CHEBI:29101"/>
    </ligand>
</feature>
<feature type="binding site" evidence="1">
    <location>
        <position position="165"/>
    </location>
    <ligand>
        <name>Na(+)</name>
        <dbReference type="ChEBI" id="CHEBI:29101"/>
    </ligand>
</feature>
<reference key="1">
    <citation type="journal article" date="2000" name="DNA Res.">
        <title>Complete genome structure of the nitrogen-fixing symbiotic bacterium Mesorhizobium loti.</title>
        <authorList>
            <person name="Kaneko T."/>
            <person name="Nakamura Y."/>
            <person name="Sato S."/>
            <person name="Asamizu E."/>
            <person name="Kato T."/>
            <person name="Sasamoto S."/>
            <person name="Watanabe A."/>
            <person name="Idesawa K."/>
            <person name="Ishikawa A."/>
            <person name="Kawashima K."/>
            <person name="Kimura T."/>
            <person name="Kishida Y."/>
            <person name="Kiyokawa C."/>
            <person name="Kohara M."/>
            <person name="Matsumoto M."/>
            <person name="Matsuno A."/>
            <person name="Mochizuki Y."/>
            <person name="Nakayama S."/>
            <person name="Nakazaki N."/>
            <person name="Shimpo S."/>
            <person name="Sugimoto M."/>
            <person name="Takeuchi C."/>
            <person name="Yamada M."/>
            <person name="Tabata S."/>
        </authorList>
    </citation>
    <scope>NUCLEOTIDE SEQUENCE [LARGE SCALE GENOMIC DNA]</scope>
    <source>
        <strain>LMG 29417 / CECT 9101 / MAFF 303099</strain>
    </source>
</reference>
<name>HSLV_RHILO</name>
<proteinExistence type="inferred from homology"/>
<keyword id="KW-0021">Allosteric enzyme</keyword>
<keyword id="KW-0963">Cytoplasm</keyword>
<keyword id="KW-0378">Hydrolase</keyword>
<keyword id="KW-0479">Metal-binding</keyword>
<keyword id="KW-0645">Protease</keyword>
<keyword id="KW-0915">Sodium</keyword>
<keyword id="KW-0888">Threonine protease</keyword>
<organism>
    <name type="scientific">Mesorhizobium japonicum (strain LMG 29417 / CECT 9101 / MAFF 303099)</name>
    <name type="common">Mesorhizobium loti (strain MAFF 303099)</name>
    <dbReference type="NCBI Taxonomy" id="266835"/>
    <lineage>
        <taxon>Bacteria</taxon>
        <taxon>Pseudomonadati</taxon>
        <taxon>Pseudomonadota</taxon>
        <taxon>Alphaproteobacteria</taxon>
        <taxon>Hyphomicrobiales</taxon>
        <taxon>Phyllobacteriaceae</taxon>
        <taxon>Mesorhizobium</taxon>
    </lineage>
</organism>
<comment type="function">
    <text evidence="1">Protease subunit of a proteasome-like degradation complex believed to be a general protein degrading machinery.</text>
</comment>
<comment type="catalytic activity">
    <reaction evidence="1">
        <text>ATP-dependent cleavage of peptide bonds with broad specificity.</text>
        <dbReference type="EC" id="3.4.25.2"/>
    </reaction>
</comment>
<comment type="activity regulation">
    <text evidence="1">Allosterically activated by HslU binding.</text>
</comment>
<comment type="subunit">
    <text evidence="1">A double ring-shaped homohexamer of HslV is capped on each side by a ring-shaped HslU homohexamer. The assembly of the HslU/HslV complex is dependent on binding of ATP.</text>
</comment>
<comment type="subcellular location">
    <subcellularLocation>
        <location evidence="1">Cytoplasm</location>
    </subcellularLocation>
</comment>
<comment type="similarity">
    <text evidence="1">Belongs to the peptidase T1B family. HslV subfamily.</text>
</comment>
<gene>
    <name evidence="1" type="primary">hslV</name>
    <name type="ordered locus">mll5007</name>
</gene>
<dbReference type="EC" id="3.4.25.2" evidence="1"/>
<dbReference type="EMBL" id="BA000012">
    <property type="protein sequence ID" value="BAB51533.1"/>
    <property type="molecule type" value="Genomic_DNA"/>
</dbReference>
<dbReference type="SMR" id="Q98CT8"/>
<dbReference type="MEROPS" id="T01.006"/>
<dbReference type="KEGG" id="mlo:mll5007"/>
<dbReference type="eggNOG" id="COG5405">
    <property type="taxonomic scope" value="Bacteria"/>
</dbReference>
<dbReference type="HOGENOM" id="CLU_093872_1_0_5"/>
<dbReference type="Proteomes" id="UP000000552">
    <property type="component" value="Chromosome"/>
</dbReference>
<dbReference type="GO" id="GO:0009376">
    <property type="term" value="C:HslUV protease complex"/>
    <property type="evidence" value="ECO:0007669"/>
    <property type="project" value="UniProtKB-UniRule"/>
</dbReference>
<dbReference type="GO" id="GO:0005839">
    <property type="term" value="C:proteasome core complex"/>
    <property type="evidence" value="ECO:0007669"/>
    <property type="project" value="InterPro"/>
</dbReference>
<dbReference type="GO" id="GO:0046872">
    <property type="term" value="F:metal ion binding"/>
    <property type="evidence" value="ECO:0007669"/>
    <property type="project" value="UniProtKB-KW"/>
</dbReference>
<dbReference type="GO" id="GO:0004298">
    <property type="term" value="F:threonine-type endopeptidase activity"/>
    <property type="evidence" value="ECO:0007669"/>
    <property type="project" value="UniProtKB-KW"/>
</dbReference>
<dbReference type="GO" id="GO:0051603">
    <property type="term" value="P:proteolysis involved in protein catabolic process"/>
    <property type="evidence" value="ECO:0007669"/>
    <property type="project" value="InterPro"/>
</dbReference>
<dbReference type="CDD" id="cd01913">
    <property type="entry name" value="protease_HslV"/>
    <property type="match status" value="1"/>
</dbReference>
<dbReference type="FunFam" id="3.60.20.10:FF:000002">
    <property type="entry name" value="ATP-dependent protease subunit HslV"/>
    <property type="match status" value="1"/>
</dbReference>
<dbReference type="Gene3D" id="3.60.20.10">
    <property type="entry name" value="Glutamine Phosphoribosylpyrophosphate, subunit 1, domain 1"/>
    <property type="match status" value="1"/>
</dbReference>
<dbReference type="HAMAP" id="MF_00248">
    <property type="entry name" value="HslV"/>
    <property type="match status" value="1"/>
</dbReference>
<dbReference type="InterPro" id="IPR022281">
    <property type="entry name" value="ATP-dep_Prtase_HsIV_su"/>
</dbReference>
<dbReference type="InterPro" id="IPR029055">
    <property type="entry name" value="Ntn_hydrolases_N"/>
</dbReference>
<dbReference type="InterPro" id="IPR001353">
    <property type="entry name" value="Proteasome_sua/b"/>
</dbReference>
<dbReference type="InterPro" id="IPR023333">
    <property type="entry name" value="Proteasome_suB-type"/>
</dbReference>
<dbReference type="NCBIfam" id="TIGR03692">
    <property type="entry name" value="ATP_dep_HslV"/>
    <property type="match status" value="1"/>
</dbReference>
<dbReference type="NCBIfam" id="NF003964">
    <property type="entry name" value="PRK05456.1"/>
    <property type="match status" value="1"/>
</dbReference>
<dbReference type="PANTHER" id="PTHR32194:SF7">
    <property type="entry name" value="ATP-DEPENDENT PROTEASE SUBUNIT HSLV"/>
    <property type="match status" value="1"/>
</dbReference>
<dbReference type="PANTHER" id="PTHR32194">
    <property type="entry name" value="METALLOPROTEASE TLDD"/>
    <property type="match status" value="1"/>
</dbReference>
<dbReference type="Pfam" id="PF00227">
    <property type="entry name" value="Proteasome"/>
    <property type="match status" value="1"/>
</dbReference>
<dbReference type="PIRSF" id="PIRSF039093">
    <property type="entry name" value="HslV"/>
    <property type="match status" value="1"/>
</dbReference>
<dbReference type="SUPFAM" id="SSF56235">
    <property type="entry name" value="N-terminal nucleophile aminohydrolases (Ntn hydrolases)"/>
    <property type="match status" value="1"/>
</dbReference>
<dbReference type="PROSITE" id="PS51476">
    <property type="entry name" value="PROTEASOME_BETA_2"/>
    <property type="match status" value="1"/>
</dbReference>
<accession>Q98CT8</accession>